<comment type="function">
    <text evidence="1">Part of the phosphoribosylformylglycinamidine synthase complex involved in the purines biosynthetic pathway. Catalyzes the ATP-dependent conversion of formylglycinamide ribonucleotide (FGAR) and glutamine to yield formylglycinamidine ribonucleotide (FGAM) and glutamate. The FGAM synthase complex is composed of three subunits. PurQ produces an ammonia molecule by converting glutamine to glutamate. PurL transfers the ammonia molecule to FGAR to form FGAM in an ATP-dependent manner. PurS interacts with PurQ and PurL and is thought to assist in the transfer of the ammonia molecule from PurQ to PurL.</text>
</comment>
<comment type="catalytic activity">
    <reaction evidence="1">
        <text>N(2)-formyl-N(1)-(5-phospho-beta-D-ribosyl)glycinamide + L-glutamine + ATP + H2O = 2-formamido-N(1)-(5-O-phospho-beta-D-ribosyl)acetamidine + L-glutamate + ADP + phosphate + H(+)</text>
        <dbReference type="Rhea" id="RHEA:17129"/>
        <dbReference type="ChEBI" id="CHEBI:15377"/>
        <dbReference type="ChEBI" id="CHEBI:15378"/>
        <dbReference type="ChEBI" id="CHEBI:29985"/>
        <dbReference type="ChEBI" id="CHEBI:30616"/>
        <dbReference type="ChEBI" id="CHEBI:43474"/>
        <dbReference type="ChEBI" id="CHEBI:58359"/>
        <dbReference type="ChEBI" id="CHEBI:147286"/>
        <dbReference type="ChEBI" id="CHEBI:147287"/>
        <dbReference type="ChEBI" id="CHEBI:456216"/>
        <dbReference type="EC" id="6.3.5.3"/>
    </reaction>
</comment>
<comment type="catalytic activity">
    <reaction evidence="1">
        <text>L-glutamine + H2O = L-glutamate + NH4(+)</text>
        <dbReference type="Rhea" id="RHEA:15889"/>
        <dbReference type="ChEBI" id="CHEBI:15377"/>
        <dbReference type="ChEBI" id="CHEBI:28938"/>
        <dbReference type="ChEBI" id="CHEBI:29985"/>
        <dbReference type="ChEBI" id="CHEBI:58359"/>
        <dbReference type="EC" id="3.5.1.2"/>
    </reaction>
</comment>
<comment type="pathway">
    <text evidence="1">Purine metabolism; IMP biosynthesis via de novo pathway; 5-amino-1-(5-phospho-D-ribosyl)imidazole from N(2)-formyl-N(1)-(5-phospho-D-ribosyl)glycinamide: step 1/2.</text>
</comment>
<comment type="subunit">
    <text evidence="1">Part of the FGAM synthase complex composed of 1 PurL, 1 PurQ and 2 PurS subunits.</text>
</comment>
<comment type="subcellular location">
    <subcellularLocation>
        <location evidence="1">Cytoplasm</location>
    </subcellularLocation>
</comment>
<sequence length="217" mass="23562">MNIGIIVFPGSNCDRDVRWATEGCLGVPTSFLWHETTDLDGFDAIVIPGGFSYGDYLRCGAIARFAPVLNSLISFVDKGGKVLGICNGFQILTELGLLQGALTRNKNLHFICDRANLSIESTKSTWMKNYKKHDSISLPIAHGEGRYQCSSDVLKKLQDDDSVALRYADNPNGSIHDIAGITNKKGNVLGMMPHPERACDDALGDIDGKSILSTLLS</sequence>
<name>PURQ_PROMT</name>
<reference key="1">
    <citation type="journal article" date="2007" name="PLoS Genet.">
        <title>Patterns and implications of gene gain and loss in the evolution of Prochlorococcus.</title>
        <authorList>
            <person name="Kettler G.C."/>
            <person name="Martiny A.C."/>
            <person name="Huang K."/>
            <person name="Zucker J."/>
            <person name="Coleman M.L."/>
            <person name="Rodrigue S."/>
            <person name="Chen F."/>
            <person name="Lapidus A."/>
            <person name="Ferriera S."/>
            <person name="Johnson J."/>
            <person name="Steglich C."/>
            <person name="Church G.M."/>
            <person name="Richardson P."/>
            <person name="Chisholm S.W."/>
        </authorList>
    </citation>
    <scope>NUCLEOTIDE SEQUENCE [LARGE SCALE GENOMIC DNA]</scope>
    <source>
        <strain>NATL2A</strain>
    </source>
</reference>
<accession>Q46LE9</accession>
<dbReference type="EC" id="6.3.5.3" evidence="1"/>
<dbReference type="EC" id="3.5.1.2" evidence="1"/>
<dbReference type="EMBL" id="CP000095">
    <property type="protein sequence ID" value="AAZ57679.1"/>
    <property type="molecule type" value="Genomic_DNA"/>
</dbReference>
<dbReference type="RefSeq" id="WP_011293721.1">
    <property type="nucleotide sequence ID" value="NC_007335.2"/>
</dbReference>
<dbReference type="SMR" id="Q46LE9"/>
<dbReference type="STRING" id="59920.PMN2A_0187"/>
<dbReference type="KEGG" id="pmn:PMN2A_0187"/>
<dbReference type="HOGENOM" id="CLU_001031_3_1_3"/>
<dbReference type="OrthoDB" id="9804441at2"/>
<dbReference type="PhylomeDB" id="Q46LE9"/>
<dbReference type="UniPathway" id="UPA00074">
    <property type="reaction ID" value="UER00128"/>
</dbReference>
<dbReference type="Proteomes" id="UP000002535">
    <property type="component" value="Chromosome"/>
</dbReference>
<dbReference type="GO" id="GO:0005737">
    <property type="term" value="C:cytoplasm"/>
    <property type="evidence" value="ECO:0007669"/>
    <property type="project" value="UniProtKB-SubCell"/>
</dbReference>
<dbReference type="GO" id="GO:0005524">
    <property type="term" value="F:ATP binding"/>
    <property type="evidence" value="ECO:0007669"/>
    <property type="project" value="UniProtKB-KW"/>
</dbReference>
<dbReference type="GO" id="GO:0004359">
    <property type="term" value="F:glutaminase activity"/>
    <property type="evidence" value="ECO:0007669"/>
    <property type="project" value="UniProtKB-EC"/>
</dbReference>
<dbReference type="GO" id="GO:0004642">
    <property type="term" value="F:phosphoribosylformylglycinamidine synthase activity"/>
    <property type="evidence" value="ECO:0007669"/>
    <property type="project" value="UniProtKB-UniRule"/>
</dbReference>
<dbReference type="GO" id="GO:0006189">
    <property type="term" value="P:'de novo' IMP biosynthetic process"/>
    <property type="evidence" value="ECO:0007669"/>
    <property type="project" value="UniProtKB-UniRule"/>
</dbReference>
<dbReference type="CDD" id="cd01740">
    <property type="entry name" value="GATase1_FGAR_AT"/>
    <property type="match status" value="1"/>
</dbReference>
<dbReference type="Gene3D" id="3.40.50.880">
    <property type="match status" value="1"/>
</dbReference>
<dbReference type="HAMAP" id="MF_00421">
    <property type="entry name" value="PurQ"/>
    <property type="match status" value="1"/>
</dbReference>
<dbReference type="InterPro" id="IPR029062">
    <property type="entry name" value="Class_I_gatase-like"/>
</dbReference>
<dbReference type="InterPro" id="IPR010075">
    <property type="entry name" value="PRibForGlyAmidine_synth_PurQ"/>
</dbReference>
<dbReference type="NCBIfam" id="TIGR01737">
    <property type="entry name" value="FGAM_synth_I"/>
    <property type="match status" value="1"/>
</dbReference>
<dbReference type="NCBIfam" id="NF002957">
    <property type="entry name" value="PRK03619.1"/>
    <property type="match status" value="1"/>
</dbReference>
<dbReference type="PANTHER" id="PTHR47552">
    <property type="entry name" value="PHOSPHORIBOSYLFORMYLGLYCINAMIDINE SYNTHASE SUBUNIT PURQ"/>
    <property type="match status" value="1"/>
</dbReference>
<dbReference type="PANTHER" id="PTHR47552:SF1">
    <property type="entry name" value="PHOSPHORIBOSYLFORMYLGLYCINAMIDINE SYNTHASE SUBUNIT PURQ"/>
    <property type="match status" value="1"/>
</dbReference>
<dbReference type="Pfam" id="PF13507">
    <property type="entry name" value="GATase_5"/>
    <property type="match status" value="1"/>
</dbReference>
<dbReference type="PIRSF" id="PIRSF001586">
    <property type="entry name" value="FGAM_synth_I"/>
    <property type="match status" value="1"/>
</dbReference>
<dbReference type="SMART" id="SM01211">
    <property type="entry name" value="GATase_5"/>
    <property type="match status" value="1"/>
</dbReference>
<dbReference type="SUPFAM" id="SSF52317">
    <property type="entry name" value="Class I glutamine amidotransferase-like"/>
    <property type="match status" value="1"/>
</dbReference>
<dbReference type="PROSITE" id="PS51273">
    <property type="entry name" value="GATASE_TYPE_1"/>
    <property type="match status" value="1"/>
</dbReference>
<organism>
    <name type="scientific">Prochlorococcus marinus (strain NATL2A)</name>
    <dbReference type="NCBI Taxonomy" id="59920"/>
    <lineage>
        <taxon>Bacteria</taxon>
        <taxon>Bacillati</taxon>
        <taxon>Cyanobacteriota</taxon>
        <taxon>Cyanophyceae</taxon>
        <taxon>Synechococcales</taxon>
        <taxon>Prochlorococcaceae</taxon>
        <taxon>Prochlorococcus</taxon>
    </lineage>
</organism>
<gene>
    <name evidence="1" type="primary">purQ</name>
    <name type="ordered locus">PMN2A_0187</name>
</gene>
<evidence type="ECO:0000255" key="1">
    <source>
        <dbReference type="HAMAP-Rule" id="MF_00421"/>
    </source>
</evidence>
<keyword id="KW-0067">ATP-binding</keyword>
<keyword id="KW-0963">Cytoplasm</keyword>
<keyword id="KW-0315">Glutamine amidotransferase</keyword>
<keyword id="KW-0378">Hydrolase</keyword>
<keyword id="KW-0436">Ligase</keyword>
<keyword id="KW-0547">Nucleotide-binding</keyword>
<keyword id="KW-0658">Purine biosynthesis</keyword>
<keyword id="KW-1185">Reference proteome</keyword>
<protein>
    <recommendedName>
        <fullName evidence="1">Phosphoribosylformylglycinamidine synthase subunit PurQ</fullName>
        <shortName evidence="1">FGAM synthase</shortName>
        <ecNumber evidence="1">6.3.5.3</ecNumber>
    </recommendedName>
    <alternativeName>
        <fullName evidence="1">Formylglycinamide ribonucleotide amidotransferase subunit I</fullName>
        <shortName evidence="1">FGAR amidotransferase I</shortName>
        <shortName evidence="1">FGAR-AT I</shortName>
    </alternativeName>
    <alternativeName>
        <fullName evidence="1">Glutaminase PurQ</fullName>
        <ecNumber evidence="1">3.5.1.2</ecNumber>
    </alternativeName>
    <alternativeName>
        <fullName evidence="1">Phosphoribosylformylglycinamidine synthase subunit I</fullName>
    </alternativeName>
</protein>
<proteinExistence type="inferred from homology"/>
<feature type="chain" id="PRO_0000252719" description="Phosphoribosylformylglycinamidine synthase subunit PurQ">
    <location>
        <begin position="1"/>
        <end position="217"/>
    </location>
</feature>
<feature type="domain" description="Glutamine amidotransferase type-1" evidence="1">
    <location>
        <begin position="2"/>
        <end position="217"/>
    </location>
</feature>
<feature type="active site" description="Nucleophile" evidence="1">
    <location>
        <position position="86"/>
    </location>
</feature>
<feature type="active site" evidence="1">
    <location>
        <position position="194"/>
    </location>
</feature>
<feature type="active site" evidence="1">
    <location>
        <position position="196"/>
    </location>
</feature>